<organism>
    <name type="scientific">Salmonella typhimurium (strain LT2 / SGSC1412 / ATCC 700720)</name>
    <dbReference type="NCBI Taxonomy" id="99287"/>
    <lineage>
        <taxon>Bacteria</taxon>
        <taxon>Pseudomonadati</taxon>
        <taxon>Pseudomonadota</taxon>
        <taxon>Gammaproteobacteria</taxon>
        <taxon>Enterobacterales</taxon>
        <taxon>Enterobacteriaceae</taxon>
        <taxon>Salmonella</taxon>
    </lineage>
</organism>
<comment type="function">
    <text evidence="2 3">Catalyzes the NAD-dependent oxidation and subsequent decarboxylation of D-threonate 4-phosphate to produce dihydroxyacetone phosphate (DHAP) (PubMed:27402745). Can also use 4-hydroxy-L-threonine 4-phosphate as substrate (PubMed:27294475, PubMed:27402745).</text>
</comment>
<comment type="catalytic activity">
    <reaction evidence="3">
        <text>4-O-phospho-D-threonate + NAD(+) = dihydroxyacetone phosphate + CO2 + NADH</text>
        <dbReference type="Rhea" id="RHEA:52396"/>
        <dbReference type="ChEBI" id="CHEBI:16526"/>
        <dbReference type="ChEBI" id="CHEBI:57540"/>
        <dbReference type="ChEBI" id="CHEBI:57642"/>
        <dbReference type="ChEBI" id="CHEBI:57945"/>
        <dbReference type="ChEBI" id="CHEBI:136590"/>
        <dbReference type="EC" id="1.1.1.408"/>
    </reaction>
</comment>
<comment type="cofactor">
    <cofactor evidence="1">
        <name>a divalent metal cation</name>
        <dbReference type="ChEBI" id="CHEBI:60240"/>
    </cofactor>
    <text evidence="1">Binds 1 divalent metal cation per subunit.</text>
</comment>
<comment type="biophysicochemical properties">
    <kinetics>
        <KM evidence="3">0.054 mM for D-threonate 4-phosphate</KM>
        <KM evidence="3">0.19 mM for 4-hydroxy-L-threonine 4-phosphate</KM>
        <KM evidence="2">7.24 mM for 4-hydroxy-L-threonine 4-phosphate</KM>
        <text evidence="2 3">kcat is 8.9 sec(-1) with D-threonate 4-phosphate as substrate. kcat is 0.37 sec(-1) with 4-hydroxy-L-threonine 4-phosphate as substrate (PubMed:27402745). kcat is 0.06 sec(-1) with 4-hydroxy-L-threonine 4-phosphate as substrate (PubMed:27294475).</text>
    </kinetics>
</comment>
<comment type="subunit">
    <text evidence="4">Homodimer.</text>
</comment>
<comment type="disruption phenotype">
    <text evidence="3">Deletion mutant is unable to use D-threonate as a carbon source.</text>
</comment>
<comment type="similarity">
    <text evidence="7">Belongs to the PdxA family. PdxA2 subfamily.</text>
</comment>
<reference key="1">
    <citation type="journal article" date="2001" name="Nature">
        <title>Complete genome sequence of Salmonella enterica serovar Typhimurium LT2.</title>
        <authorList>
            <person name="McClelland M."/>
            <person name="Sanderson K.E."/>
            <person name="Spieth J."/>
            <person name="Clifton S.W."/>
            <person name="Latreille P."/>
            <person name="Courtney L."/>
            <person name="Porwollik S."/>
            <person name="Ali J."/>
            <person name="Dante M."/>
            <person name="Du F."/>
            <person name="Hou S."/>
            <person name="Layman D."/>
            <person name="Leonard S."/>
            <person name="Nguyen C."/>
            <person name="Scott K."/>
            <person name="Holmes A."/>
            <person name="Grewal N."/>
            <person name="Mulvaney E."/>
            <person name="Ryan E."/>
            <person name="Sun H."/>
            <person name="Florea L."/>
            <person name="Miller W."/>
            <person name="Stoneking T."/>
            <person name="Nhan M."/>
            <person name="Waterston R."/>
            <person name="Wilson R.K."/>
        </authorList>
    </citation>
    <scope>NUCLEOTIDE SEQUENCE [LARGE SCALE GENOMIC DNA]</scope>
    <source>
        <strain>LT2 / SGSC1412 / ATCC 700720</strain>
    </source>
</reference>
<reference key="2">
    <citation type="journal article" date="2016" name="ACS Chem. Biol.">
        <title>Members of a novel kinase family (DUF1537) can recycle toxic intermediates into an essential metabolite.</title>
        <authorList>
            <person name="Thiaville J.J."/>
            <person name="Flood J."/>
            <person name="Yurgel S."/>
            <person name="Prunetti L."/>
            <person name="Elbadawi-Sidhu M."/>
            <person name="Hutinet G."/>
            <person name="Forouhar F."/>
            <person name="Zhang X."/>
            <person name="Ganesan V."/>
            <person name="Reddy P."/>
            <person name="Fiehn O."/>
            <person name="Gerlt J.A."/>
            <person name="Hunt J.F."/>
            <person name="Copley S.D."/>
            <person name="de Crecy-Lagard V."/>
        </authorList>
    </citation>
    <scope>FUNCTION</scope>
    <scope>BIOPHYSICOCHEMICAL PROPERTIES</scope>
</reference>
<reference key="3">
    <citation type="journal article" date="2016" name="Proc. Natl. Acad. Sci. U.S.A.">
        <title>Assignment of function to a domain of unknown function: DUF1537 is a new kinase family in catabolic pathways for acid sugars.</title>
        <authorList>
            <person name="Zhang X."/>
            <person name="Carter M.S."/>
            <person name="Vetting M.W."/>
            <person name="San Francisco B."/>
            <person name="Zhao S."/>
            <person name="Al-Obaidi N.F."/>
            <person name="Solbiati J.O."/>
            <person name="Thiaville J.J."/>
            <person name="de Crecy-Lagard V."/>
            <person name="Jacobson M.P."/>
            <person name="Almo S.C."/>
            <person name="Gerlt J.A."/>
        </authorList>
    </citation>
    <scope>FUNCTION</scope>
    <scope>CATALYTIC ACTIVITY</scope>
    <scope>BIOPHYSICOCHEMICAL PROPERTIES</scope>
    <scope>DISRUPTION PHENOTYPE</scope>
    <source>
        <strain>LT2</strain>
    </source>
</reference>
<reference key="4">
    <citation type="submission" date="2006-08" db="PDB data bank">
        <title>The structure of a putative 4-hydroxythreonine-4-phosphate dehydrogenase from Salmonella typhimurium.</title>
        <authorList>
            <consortium name="Midwest center for structural genomics (MCSG)"/>
        </authorList>
    </citation>
    <scope>X-RAY CRYSTALLOGRAPHY (2.3 ANGSTROMS)</scope>
    <scope>SUBUNIT</scope>
</reference>
<sequence>METKTVAITMGDPAGIGPEIIVKALSEDGLNGAPLVVIGCLATLKRLQAKGITPNVELRAIERVAEARFAPGIIHVIDEPLAQPEALEAGKVQAQAGDLAYRCVKRATELALRGDVQAIATAPLNKEALHLAGHNYPGHTELLATLTHSRDYAMVLYTDKLKVIHVSTHIALRKFLDTLSTARVETVIGIADTFLKRVGYVKPRIAVAGVNPHAGENGLFGDEETRILTPAITDARAKGMDVYGPCPPDTVFLQAYEGQYDMVVAMYHDQGHIPLKLLGFYDGVNITAGLPFIRTSADHGTAFDIAWTGKAKSESMAVSIKLAMQLA</sequence>
<keyword id="KW-0002">3D-structure</keyword>
<keyword id="KW-0119">Carbohydrate metabolism</keyword>
<keyword id="KW-0479">Metal-binding</keyword>
<keyword id="KW-0520">NAD</keyword>
<keyword id="KW-0560">Oxidoreductase</keyword>
<keyword id="KW-1185">Reference proteome</keyword>
<proteinExistence type="evidence at protein level"/>
<protein>
    <recommendedName>
        <fullName evidence="6">D-threonate 4-phosphate dehydrogenase</fullName>
        <ecNumber evidence="3">1.1.1.408</ecNumber>
    </recommendedName>
    <alternativeName>
        <fullName evidence="5">4-(phosphohydroxy)-L-threonine dehydrogenase</fullName>
        <shortName evidence="5">4PHT dehydrogenase</shortName>
    </alternativeName>
</protein>
<accession>P58718</accession>
<name>PDXA2_SALTY</name>
<evidence type="ECO:0000250" key="1">
    <source>
        <dbReference type="UniProtKB" id="P19624"/>
    </source>
</evidence>
<evidence type="ECO:0000269" key="2">
    <source>
    </source>
</evidence>
<evidence type="ECO:0000269" key="3">
    <source>
    </source>
</evidence>
<evidence type="ECO:0000269" key="4">
    <source ref="4"/>
</evidence>
<evidence type="ECO:0000303" key="5">
    <source>
    </source>
</evidence>
<evidence type="ECO:0000303" key="6">
    <source>
    </source>
</evidence>
<evidence type="ECO:0000305" key="7"/>
<evidence type="ECO:0007829" key="8">
    <source>
        <dbReference type="PDB" id="2HI1"/>
    </source>
</evidence>
<feature type="chain" id="PRO_0000188828" description="D-threonate 4-phosphate dehydrogenase">
    <location>
        <begin position="1"/>
        <end position="327"/>
    </location>
</feature>
<feature type="binding site" evidence="1">
    <location>
        <position position="139"/>
    </location>
    <ligand>
        <name>substrate</name>
    </ligand>
</feature>
<feature type="binding site" evidence="1">
    <location>
        <position position="140"/>
    </location>
    <ligand>
        <name>substrate</name>
    </ligand>
</feature>
<feature type="binding site" evidence="1">
    <location>
        <position position="169"/>
    </location>
    <ligand>
        <name>a divalent metal cation</name>
        <dbReference type="ChEBI" id="CHEBI:60240"/>
        <note>ligand shared between dimeric partners</note>
    </ligand>
</feature>
<feature type="binding site" evidence="1">
    <location>
        <position position="213"/>
    </location>
    <ligand>
        <name>a divalent metal cation</name>
        <dbReference type="ChEBI" id="CHEBI:60240"/>
        <note>ligand shared between dimeric partners</note>
    </ligand>
</feature>
<feature type="binding site" evidence="1">
    <location>
        <position position="268"/>
    </location>
    <ligand>
        <name>a divalent metal cation</name>
        <dbReference type="ChEBI" id="CHEBI:60240"/>
        <note>ligand shared between dimeric partners</note>
    </ligand>
</feature>
<feature type="binding site" evidence="1">
    <location>
        <position position="276"/>
    </location>
    <ligand>
        <name>substrate</name>
    </ligand>
</feature>
<feature type="binding site" evidence="1">
    <location>
        <position position="285"/>
    </location>
    <ligand>
        <name>substrate</name>
    </ligand>
</feature>
<feature type="binding site" evidence="1">
    <location>
        <position position="294"/>
    </location>
    <ligand>
        <name>substrate</name>
    </ligand>
</feature>
<feature type="strand" evidence="8">
    <location>
        <begin position="6"/>
        <end position="9"/>
    </location>
</feature>
<feature type="turn" evidence="8">
    <location>
        <begin position="13"/>
        <end position="16"/>
    </location>
</feature>
<feature type="helix" evidence="8">
    <location>
        <begin position="17"/>
        <end position="25"/>
    </location>
</feature>
<feature type="turn" evidence="8">
    <location>
        <begin position="28"/>
        <end position="32"/>
    </location>
</feature>
<feature type="strand" evidence="8">
    <location>
        <begin position="34"/>
        <end position="39"/>
    </location>
</feature>
<feature type="helix" evidence="8">
    <location>
        <begin position="41"/>
        <end position="49"/>
    </location>
</feature>
<feature type="strand" evidence="8">
    <location>
        <begin position="57"/>
        <end position="63"/>
    </location>
</feature>
<feature type="helix" evidence="8">
    <location>
        <begin position="64"/>
        <end position="66"/>
    </location>
</feature>
<feature type="strand" evidence="8">
    <location>
        <begin position="73"/>
        <end position="78"/>
    </location>
</feature>
<feature type="helix" evidence="8">
    <location>
        <begin position="84"/>
        <end position="86"/>
    </location>
</feature>
<feature type="helix" evidence="8">
    <location>
        <begin position="94"/>
        <end position="112"/>
    </location>
</feature>
<feature type="strand" evidence="8">
    <location>
        <begin position="117"/>
        <end position="121"/>
    </location>
</feature>
<feature type="helix" evidence="8">
    <location>
        <begin position="126"/>
        <end position="131"/>
    </location>
</feature>
<feature type="helix" evidence="8">
    <location>
        <begin position="139"/>
        <end position="146"/>
    </location>
</feature>
<feature type="strand" evidence="8">
    <location>
        <begin position="153"/>
        <end position="157"/>
    </location>
</feature>
<feature type="strand" evidence="8">
    <location>
        <begin position="162"/>
        <end position="166"/>
    </location>
</feature>
<feature type="helix" evidence="8">
    <location>
        <begin position="172"/>
        <end position="178"/>
    </location>
</feature>
<feature type="helix" evidence="8">
    <location>
        <begin position="181"/>
        <end position="197"/>
    </location>
</feature>
<feature type="strand" evidence="8">
    <location>
        <begin position="204"/>
        <end position="208"/>
    </location>
</feature>
<feature type="helix" evidence="8">
    <location>
        <begin position="212"/>
        <end position="214"/>
    </location>
</feature>
<feature type="helix" evidence="8">
    <location>
        <begin position="222"/>
        <end position="226"/>
    </location>
</feature>
<feature type="helix" evidence="8">
    <location>
        <begin position="228"/>
        <end position="236"/>
    </location>
</feature>
<feature type="turn" evidence="8">
    <location>
        <begin position="237"/>
        <end position="239"/>
    </location>
</feature>
<feature type="strand" evidence="8">
    <location>
        <begin position="241"/>
        <end position="246"/>
    </location>
</feature>
<feature type="helix" evidence="8">
    <location>
        <begin position="248"/>
        <end position="256"/>
    </location>
</feature>
<feature type="strand" evidence="8">
    <location>
        <begin position="261"/>
        <end position="267"/>
    </location>
</feature>
<feature type="helix" evidence="8">
    <location>
        <begin position="268"/>
        <end position="277"/>
    </location>
</feature>
<feature type="strand" evidence="8">
    <location>
        <begin position="283"/>
        <end position="288"/>
    </location>
</feature>
<feature type="strand" evidence="8">
    <location>
        <begin position="290"/>
        <end position="298"/>
    </location>
</feature>
<feature type="turn" evidence="8">
    <location>
        <begin position="303"/>
        <end position="309"/>
    </location>
</feature>
<feature type="helix" evidence="8">
    <location>
        <begin position="314"/>
        <end position="326"/>
    </location>
</feature>
<gene>
    <name evidence="5 6" type="primary">pdxA2</name>
    <name type="ordered locus">STM0163</name>
</gene>
<dbReference type="EC" id="1.1.1.408" evidence="3"/>
<dbReference type="EMBL" id="AE006468">
    <property type="protein sequence ID" value="AAL19127.1"/>
    <property type="molecule type" value="Genomic_DNA"/>
</dbReference>
<dbReference type="RefSeq" id="NP_459168.1">
    <property type="nucleotide sequence ID" value="NC_003197.2"/>
</dbReference>
<dbReference type="RefSeq" id="WP_000448745.1">
    <property type="nucleotide sequence ID" value="NC_003197.2"/>
</dbReference>
<dbReference type="PDB" id="2HI1">
    <property type="method" value="X-ray"/>
    <property type="resolution" value="2.30 A"/>
    <property type="chains" value="A/B=1-327"/>
</dbReference>
<dbReference type="PDBsum" id="2HI1"/>
<dbReference type="SMR" id="P58718"/>
<dbReference type="STRING" id="99287.STM0163"/>
<dbReference type="PaxDb" id="99287-STM0163"/>
<dbReference type="GeneID" id="1251681"/>
<dbReference type="KEGG" id="stm:STM0163"/>
<dbReference type="PATRIC" id="fig|99287.12.peg.173"/>
<dbReference type="HOGENOM" id="CLU_040168_1_0_6"/>
<dbReference type="OMA" id="APDTVFM"/>
<dbReference type="PhylomeDB" id="P58718"/>
<dbReference type="BioCyc" id="MetaCyc:STM0163-MONOMER"/>
<dbReference type="BioCyc" id="SENT99287:STM0163-MONOMER"/>
<dbReference type="BRENDA" id="1.1.1.408">
    <property type="organism ID" value="5542"/>
</dbReference>
<dbReference type="BRENDA" id="1.1.1.409">
    <property type="organism ID" value="5542"/>
</dbReference>
<dbReference type="EvolutionaryTrace" id="P58718"/>
<dbReference type="Proteomes" id="UP000001014">
    <property type="component" value="Chromosome"/>
</dbReference>
<dbReference type="GO" id="GO:0046872">
    <property type="term" value="F:metal ion binding"/>
    <property type="evidence" value="ECO:0007669"/>
    <property type="project" value="UniProtKB-KW"/>
</dbReference>
<dbReference type="GO" id="GO:0051287">
    <property type="term" value="F:NAD binding"/>
    <property type="evidence" value="ECO:0007669"/>
    <property type="project" value="InterPro"/>
</dbReference>
<dbReference type="GO" id="GO:0016491">
    <property type="term" value="F:oxidoreductase activity"/>
    <property type="evidence" value="ECO:0007669"/>
    <property type="project" value="UniProtKB-KW"/>
</dbReference>
<dbReference type="Gene3D" id="3.40.718.10">
    <property type="entry name" value="Isopropylmalate Dehydrogenase"/>
    <property type="match status" value="1"/>
</dbReference>
<dbReference type="InterPro" id="IPR005255">
    <property type="entry name" value="PdxA_fam"/>
</dbReference>
<dbReference type="NCBIfam" id="TIGR00557">
    <property type="entry name" value="pdxA"/>
    <property type="match status" value="1"/>
</dbReference>
<dbReference type="NCBIfam" id="NF002891">
    <property type="entry name" value="PRK03371.1"/>
    <property type="match status" value="1"/>
</dbReference>
<dbReference type="PANTHER" id="PTHR30004">
    <property type="entry name" value="4-HYDROXYTHREONINE-4-PHOSPHATE DEHYDROGENASE"/>
    <property type="match status" value="1"/>
</dbReference>
<dbReference type="PANTHER" id="PTHR30004:SF6">
    <property type="entry name" value="D-THREONATE 4-PHOSPHATE DEHYDROGENASE"/>
    <property type="match status" value="1"/>
</dbReference>
<dbReference type="Pfam" id="PF04166">
    <property type="entry name" value="PdxA"/>
    <property type="match status" value="1"/>
</dbReference>
<dbReference type="SUPFAM" id="SSF53659">
    <property type="entry name" value="Isocitrate/Isopropylmalate dehydrogenase-like"/>
    <property type="match status" value="1"/>
</dbReference>